<organism>
    <name type="scientific">Aspergillus clavatus (strain ATCC 1007 / CBS 513.65 / DSM 816 / NCTC 3887 / NRRL 1 / QM 1276 / 107)</name>
    <dbReference type="NCBI Taxonomy" id="344612"/>
    <lineage>
        <taxon>Eukaryota</taxon>
        <taxon>Fungi</taxon>
        <taxon>Dikarya</taxon>
        <taxon>Ascomycota</taxon>
        <taxon>Pezizomycotina</taxon>
        <taxon>Eurotiomycetes</taxon>
        <taxon>Eurotiomycetidae</taxon>
        <taxon>Eurotiales</taxon>
        <taxon>Aspergillaceae</taxon>
        <taxon>Aspergillus</taxon>
        <taxon>Aspergillus subgen. Fumigati</taxon>
    </lineage>
</organism>
<sequence>MAEAGQPRALPTAFAPPPPLWKHFTPGNLKKLEEIKREASKGEDGKARRKDWTPAELRALDLSPELGFLVPPEIPTKGHYSVFGELQSLSTALPSLQEQGIEQLYPSPPTETDREAPSQPSRPFNHAYYLLKISKSLLLNFLEFVGVLSVAPEQFQAKVEDLRNLFINAHHLLNLYRPHQARESLIMMMEEQLKRSREEIEQMDKLHTEIKGFLDQLKAQGVDVDSAAESVSKATKKDDTSNKRAAEDSGLIWDILGEID</sequence>
<reference key="1">
    <citation type="journal article" date="2008" name="PLoS Genet.">
        <title>Genomic islands in the pathogenic filamentous fungus Aspergillus fumigatus.</title>
        <authorList>
            <person name="Fedorova N.D."/>
            <person name="Khaldi N."/>
            <person name="Joardar V.S."/>
            <person name="Maiti R."/>
            <person name="Amedeo P."/>
            <person name="Anderson M.J."/>
            <person name="Crabtree J."/>
            <person name="Silva J.C."/>
            <person name="Badger J.H."/>
            <person name="Albarraq A."/>
            <person name="Angiuoli S."/>
            <person name="Bussey H."/>
            <person name="Bowyer P."/>
            <person name="Cotty P.J."/>
            <person name="Dyer P.S."/>
            <person name="Egan A."/>
            <person name="Galens K."/>
            <person name="Fraser-Liggett C.M."/>
            <person name="Haas B.J."/>
            <person name="Inman J.M."/>
            <person name="Kent R."/>
            <person name="Lemieux S."/>
            <person name="Malavazi I."/>
            <person name="Orvis J."/>
            <person name="Roemer T."/>
            <person name="Ronning C.M."/>
            <person name="Sundaram J.P."/>
            <person name="Sutton G."/>
            <person name="Turner G."/>
            <person name="Venter J.C."/>
            <person name="White O.R."/>
            <person name="Whitty B.R."/>
            <person name="Youngman P."/>
            <person name="Wolfe K.H."/>
            <person name="Goldman G.H."/>
            <person name="Wortman J.R."/>
            <person name="Jiang B."/>
            <person name="Denning D.W."/>
            <person name="Nierman W.C."/>
        </authorList>
    </citation>
    <scope>NUCLEOTIDE SEQUENCE [LARGE SCALE GENOMIC DNA]</scope>
    <source>
        <strain>ATCC 1007 / CBS 513.65 / DSM 816 / NCTC 3887 / NRRL 1 / QM 1276 / 107</strain>
    </source>
</reference>
<dbReference type="EMBL" id="DS027060">
    <property type="protein sequence ID" value="EAW06512.1"/>
    <property type="molecule type" value="Genomic_DNA"/>
</dbReference>
<dbReference type="RefSeq" id="XP_001267938.1">
    <property type="nucleotide sequence ID" value="XM_001267937.1"/>
</dbReference>
<dbReference type="SMR" id="A1CT75"/>
<dbReference type="STRING" id="344612.A1CT75"/>
<dbReference type="EnsemblFungi" id="EAW06512">
    <property type="protein sequence ID" value="EAW06512"/>
    <property type="gene ID" value="ACLA_082020"/>
</dbReference>
<dbReference type="GeneID" id="4700260"/>
<dbReference type="KEGG" id="act:ACLA_082020"/>
<dbReference type="VEuPathDB" id="FungiDB:ACLA_082020"/>
<dbReference type="eggNOG" id="KOG0570">
    <property type="taxonomic scope" value="Eukaryota"/>
</dbReference>
<dbReference type="HOGENOM" id="CLU_065214_0_1_1"/>
<dbReference type="OMA" id="IHDSYSM"/>
<dbReference type="OrthoDB" id="10253553at2759"/>
<dbReference type="Proteomes" id="UP000006701">
    <property type="component" value="Unassembled WGS sequence"/>
</dbReference>
<dbReference type="GO" id="GO:0070847">
    <property type="term" value="C:core mediator complex"/>
    <property type="evidence" value="ECO:0007669"/>
    <property type="project" value="TreeGrafter"/>
</dbReference>
<dbReference type="GO" id="GO:0016592">
    <property type="term" value="C:mediator complex"/>
    <property type="evidence" value="ECO:0007669"/>
    <property type="project" value="InterPro"/>
</dbReference>
<dbReference type="GO" id="GO:0003712">
    <property type="term" value="F:transcription coregulator activity"/>
    <property type="evidence" value="ECO:0007669"/>
    <property type="project" value="InterPro"/>
</dbReference>
<dbReference type="GO" id="GO:0006357">
    <property type="term" value="P:regulation of transcription by RNA polymerase II"/>
    <property type="evidence" value="ECO:0007669"/>
    <property type="project" value="InterPro"/>
</dbReference>
<dbReference type="Gene3D" id="6.10.140.1520">
    <property type="match status" value="1"/>
</dbReference>
<dbReference type="Gene3D" id="6.10.140.200">
    <property type="match status" value="1"/>
</dbReference>
<dbReference type="InterPro" id="IPR037212">
    <property type="entry name" value="Med7/Med21-like"/>
</dbReference>
<dbReference type="InterPro" id="IPR009244">
    <property type="entry name" value="Mediatior_Med7"/>
</dbReference>
<dbReference type="InterPro" id="IPR044888">
    <property type="entry name" value="Mediatior_Med7_sf"/>
</dbReference>
<dbReference type="PANTHER" id="PTHR21428">
    <property type="entry name" value="MEDIATOR OF RNA POLYMERASE II TRANSCRIPTION SUBUNIT 7"/>
    <property type="match status" value="1"/>
</dbReference>
<dbReference type="PANTHER" id="PTHR21428:SF11">
    <property type="entry name" value="MEDIATOR OF RNA POLYMERASE II TRANSCRIPTION SUBUNIT 7"/>
    <property type="match status" value="1"/>
</dbReference>
<dbReference type="Pfam" id="PF05983">
    <property type="entry name" value="Med7"/>
    <property type="match status" value="1"/>
</dbReference>
<dbReference type="SUPFAM" id="SSF140718">
    <property type="entry name" value="Mediator hinge subcomplex-like"/>
    <property type="match status" value="1"/>
</dbReference>
<comment type="function">
    <text evidence="1">Component of the Mediator complex, a coactivator involved in the regulated transcription of nearly all RNA polymerase II-dependent genes. Mediator functions as a bridge to convey information from gene-specific regulatory proteins to the basal RNA polymerase II transcription machinery. Mediator is recruited to promoters by direct interactions with regulatory proteins and serves as a scaffold for the assembly of a functional preinitiation complex with RNA polymerase II and the general transcription factors (By similarity).</text>
</comment>
<comment type="subunit">
    <text evidence="1">Component of the Mediator complex.</text>
</comment>
<comment type="subcellular location">
    <subcellularLocation>
        <location evidence="1">Nucleus</location>
    </subcellularLocation>
</comment>
<comment type="similarity">
    <text evidence="3">Belongs to the Mediator complex subunit 7 family.</text>
</comment>
<evidence type="ECO:0000250" key="1"/>
<evidence type="ECO:0000256" key="2">
    <source>
        <dbReference type="SAM" id="MobiDB-lite"/>
    </source>
</evidence>
<evidence type="ECO:0000305" key="3"/>
<name>MED7_ASPCL</name>
<feature type="chain" id="PRO_0000303191" description="Mediator of RNA polymerase II transcription subunit 7">
    <location>
        <begin position="1"/>
        <end position="260"/>
    </location>
</feature>
<feature type="region of interest" description="Disordered" evidence="2">
    <location>
        <begin position="1"/>
        <end position="21"/>
    </location>
</feature>
<gene>
    <name type="primary">med7</name>
    <name type="ORF">ACLA_082020</name>
</gene>
<keyword id="KW-0010">Activator</keyword>
<keyword id="KW-0539">Nucleus</keyword>
<keyword id="KW-1185">Reference proteome</keyword>
<keyword id="KW-0804">Transcription</keyword>
<keyword id="KW-0805">Transcription regulation</keyword>
<accession>A1CT75</accession>
<protein>
    <recommendedName>
        <fullName>Mediator of RNA polymerase II transcription subunit 7</fullName>
    </recommendedName>
    <alternativeName>
        <fullName>Mediator complex subunit 7</fullName>
    </alternativeName>
</protein>
<proteinExistence type="inferred from homology"/>